<feature type="chain" id="PRO_0000231490" description="Probable L-ascorbate-6-phosphate lactonase UlaG">
    <location>
        <begin position="1"/>
        <end position="354"/>
    </location>
</feature>
<comment type="function">
    <text evidence="1">Probably catalyzes the hydrolysis of L-ascorbate-6-P into 3-keto-L-gulonate-6-P. Is essential for L-ascorbate utilization under anaerobic conditions.</text>
</comment>
<comment type="catalytic activity">
    <reaction evidence="1">
        <text>L-ascorbate 6-phosphate + H2O = 3-dehydro-L-gulonate 6-phosphate</text>
        <dbReference type="Rhea" id="RHEA:28803"/>
        <dbReference type="ChEBI" id="CHEBI:15377"/>
        <dbReference type="ChEBI" id="CHEBI:58774"/>
        <dbReference type="ChEBI" id="CHEBI:61698"/>
    </reaction>
</comment>
<comment type="cofactor">
    <cofactor evidence="1">
        <name>a divalent metal cation</name>
        <dbReference type="ChEBI" id="CHEBI:60240"/>
    </cofactor>
</comment>
<comment type="pathway">
    <text evidence="1">Cofactor degradation; L-ascorbate degradation; D-xylulose 5-phosphate from L-ascorbate: step 1/4.</text>
</comment>
<comment type="subcellular location">
    <subcellularLocation>
        <location evidence="1">Cytoplasm</location>
    </subcellularLocation>
</comment>
<comment type="induction">
    <text evidence="1">Induced by L-ascorbate. Repressed by UlaR.</text>
</comment>
<comment type="similarity">
    <text evidence="1">Belongs to the UlaG family.</text>
</comment>
<comment type="sequence caution" evidence="2">
    <conflict type="erroneous termination">
        <sequence resource="EMBL-CDS" id="ABB64250"/>
    </conflict>
    <text>Truncated C-terminus.</text>
</comment>
<proteinExistence type="inferred from homology"/>
<reference key="1">
    <citation type="journal article" date="2005" name="Nucleic Acids Res.">
        <title>Genome dynamics and diversity of Shigella species, the etiologic agents of bacillary dysentery.</title>
        <authorList>
            <person name="Yang F."/>
            <person name="Yang J."/>
            <person name="Zhang X."/>
            <person name="Chen L."/>
            <person name="Jiang Y."/>
            <person name="Yan Y."/>
            <person name="Tang X."/>
            <person name="Wang J."/>
            <person name="Xiong Z."/>
            <person name="Dong J."/>
            <person name="Xue Y."/>
            <person name="Zhu Y."/>
            <person name="Xu X."/>
            <person name="Sun L."/>
            <person name="Chen S."/>
            <person name="Nie H."/>
            <person name="Peng J."/>
            <person name="Xu J."/>
            <person name="Wang Y."/>
            <person name="Yuan Z."/>
            <person name="Wen Y."/>
            <person name="Yao Z."/>
            <person name="Shen Y."/>
            <person name="Qiang B."/>
            <person name="Hou Y."/>
            <person name="Yu J."/>
            <person name="Jin Q."/>
        </authorList>
    </citation>
    <scope>NUCLEOTIDE SEQUENCE [LARGE SCALE GENOMIC DNA]</scope>
    <source>
        <strain>Sd197</strain>
    </source>
</reference>
<evidence type="ECO:0000255" key="1">
    <source>
        <dbReference type="HAMAP-Rule" id="MF_01266"/>
    </source>
</evidence>
<evidence type="ECO:0000305" key="2"/>
<accession>Q328K5</accession>
<sequence length="354" mass="40159">MSKVKSITRESWILSTFPEWGSWLNEEIEQEQVAPGTFAMWWLGCTGIWLKSEGGTNVCVDFWCDTGKQSHGNPLMKQGHQMQRMAGVKKLQPNLRTNPFVLDPFAIRQIDAVLANHDHNDHIDVNVAAAVMQNCADDVPFIGPKTCVDLWIGWGVPKERCIVVKPGDVVKVKDIEIHALDAFDRTALITLPADQKAAGILPDGMDDRAVNYLFKTPGGSLYHSGDSHYSNYYAKHGNEHQIDVALGSYGENPRGITDKMTSADMLRMGEALNAKVVIPFHHDIWSNFQADPQEIRVLWEMKKDRLKYGFKPFIWQVGGKFTWPLDKDNFEYHYPRGFDDCFTIEPDLPFKSFL</sequence>
<protein>
    <recommendedName>
        <fullName evidence="1">Probable L-ascorbate-6-phosphate lactonase UlaG</fullName>
        <ecNumber evidence="1">3.1.1.-</ecNumber>
    </recommendedName>
    <alternativeName>
        <fullName evidence="1">L-ascorbate utilization protein G</fullName>
    </alternativeName>
</protein>
<keyword id="KW-0963">Cytoplasm</keyword>
<keyword id="KW-0378">Hydrolase</keyword>
<keyword id="KW-1185">Reference proteome</keyword>
<name>ULAG_SHIDS</name>
<gene>
    <name evidence="1" type="primary">ulaG</name>
    <name type="ordered locus">SDY_4361</name>
</gene>
<organism>
    <name type="scientific">Shigella dysenteriae serotype 1 (strain Sd197)</name>
    <dbReference type="NCBI Taxonomy" id="300267"/>
    <lineage>
        <taxon>Bacteria</taxon>
        <taxon>Pseudomonadati</taxon>
        <taxon>Pseudomonadota</taxon>
        <taxon>Gammaproteobacteria</taxon>
        <taxon>Enterobacterales</taxon>
        <taxon>Enterobacteriaceae</taxon>
        <taxon>Shigella</taxon>
    </lineage>
</organism>
<dbReference type="EC" id="3.1.1.-" evidence="1"/>
<dbReference type="EMBL" id="CP000034">
    <property type="protein sequence ID" value="ABB64250.1"/>
    <property type="status" value="ALT_SEQ"/>
    <property type="molecule type" value="Genomic_DNA"/>
</dbReference>
<dbReference type="SMR" id="Q328K5"/>
<dbReference type="STRING" id="300267.SDY_4361"/>
<dbReference type="EnsemblBacteria" id="ABB64250">
    <property type="protein sequence ID" value="ABB64250"/>
    <property type="gene ID" value="SDY_4361"/>
</dbReference>
<dbReference type="KEGG" id="sdy:SDY_4361"/>
<dbReference type="HOGENOM" id="CLU_074775_0_0_6"/>
<dbReference type="UniPathway" id="UPA00263">
    <property type="reaction ID" value="UER00377"/>
</dbReference>
<dbReference type="Proteomes" id="UP000002716">
    <property type="component" value="Chromosome"/>
</dbReference>
<dbReference type="GO" id="GO:0005737">
    <property type="term" value="C:cytoplasm"/>
    <property type="evidence" value="ECO:0007669"/>
    <property type="project" value="UniProtKB-SubCell"/>
</dbReference>
<dbReference type="GO" id="GO:0035460">
    <property type="term" value="F:L-ascorbate 6-phosphate lactonase activity"/>
    <property type="evidence" value="ECO:0007669"/>
    <property type="project" value="InterPro"/>
</dbReference>
<dbReference type="GO" id="GO:0030145">
    <property type="term" value="F:manganese ion binding"/>
    <property type="evidence" value="ECO:0007669"/>
    <property type="project" value="InterPro"/>
</dbReference>
<dbReference type="GO" id="GO:0019854">
    <property type="term" value="P:L-ascorbic acid catabolic process"/>
    <property type="evidence" value="ECO:0007669"/>
    <property type="project" value="UniProtKB-UniRule"/>
</dbReference>
<dbReference type="CDD" id="cd16284">
    <property type="entry name" value="UlaG-like_MBL-fold"/>
    <property type="match status" value="1"/>
</dbReference>
<dbReference type="FunFam" id="3.60.15.10:FF:000004">
    <property type="entry name" value="Probable L-ascorbate-6-phosphate lactonase UlaG"/>
    <property type="match status" value="1"/>
</dbReference>
<dbReference type="Gene3D" id="3.60.15.10">
    <property type="entry name" value="Ribonuclease Z/Hydroxyacylglutathione hydrolase-like"/>
    <property type="match status" value="1"/>
</dbReference>
<dbReference type="HAMAP" id="MF_01266">
    <property type="entry name" value="UlaG"/>
    <property type="match status" value="1"/>
</dbReference>
<dbReference type="InterPro" id="IPR023951">
    <property type="entry name" value="L-ascorbate_6P_UlaG"/>
</dbReference>
<dbReference type="InterPro" id="IPR036866">
    <property type="entry name" value="RibonucZ/Hydroxyglut_hydro"/>
</dbReference>
<dbReference type="InterPro" id="IPR048021">
    <property type="entry name" value="UlaG-like_MBL-fold"/>
</dbReference>
<dbReference type="InterPro" id="IPR050114">
    <property type="entry name" value="UPF0173_UPF0282_UlaG_hydrolase"/>
</dbReference>
<dbReference type="NCBIfam" id="NF008688">
    <property type="entry name" value="PRK11709.1"/>
    <property type="match status" value="1"/>
</dbReference>
<dbReference type="PANTHER" id="PTHR43546:SF9">
    <property type="entry name" value="L-ASCORBATE-6-PHOSPHATE LACTONASE ULAG-RELATED"/>
    <property type="match status" value="1"/>
</dbReference>
<dbReference type="PANTHER" id="PTHR43546">
    <property type="entry name" value="UPF0173 METAL-DEPENDENT HYDROLASE MJ1163-RELATED"/>
    <property type="match status" value="1"/>
</dbReference>
<dbReference type="Pfam" id="PF13483">
    <property type="entry name" value="Lactamase_B_3"/>
    <property type="match status" value="1"/>
</dbReference>
<dbReference type="SUPFAM" id="SSF56281">
    <property type="entry name" value="Metallo-hydrolase/oxidoreductase"/>
    <property type="match status" value="1"/>
</dbReference>